<evidence type="ECO:0000255" key="1">
    <source>
        <dbReference type="HAMAP-Rule" id="MF_00032"/>
    </source>
</evidence>
<protein>
    <recommendedName>
        <fullName evidence="1">Translation initiation factor 6</fullName>
        <shortName evidence="1">aIF-6</shortName>
    </recommendedName>
</protein>
<accession>C3MZB3</accession>
<sequence length="223" mass="24473">MNLQRLSIFGTDNIGVYIYTNNKYTVVPRGLDSETKENIVQILGTELIEAEISRSFLLGIFISGNDNGILLPKSTIDDEFRFLKENLRDCRVEVLNSKVTALGNTILTNNKAALIYPEFNDIEEKIIKETLGVEEIRRGKIAQMITVGSVGVVTNKGGLVHVDTSEKELKELEKLFGVKIDIGTVNFGSVFIRSGLVANDKGTLVGASTTGPEILRIQKALGE</sequence>
<comment type="function">
    <text evidence="1">Binds to the 50S ribosomal subunit and prevents its association with the 30S ribosomal subunit to form the 70S initiation complex.</text>
</comment>
<comment type="similarity">
    <text evidence="1">Belongs to the eIF-6 family.</text>
</comment>
<organism>
    <name type="scientific">Saccharolobus islandicus (strain M.16.27)</name>
    <name type="common">Sulfolobus islandicus</name>
    <dbReference type="NCBI Taxonomy" id="427318"/>
    <lineage>
        <taxon>Archaea</taxon>
        <taxon>Thermoproteota</taxon>
        <taxon>Thermoprotei</taxon>
        <taxon>Sulfolobales</taxon>
        <taxon>Sulfolobaceae</taxon>
        <taxon>Saccharolobus</taxon>
    </lineage>
</organism>
<name>IF6_SACI3</name>
<proteinExistence type="inferred from homology"/>
<dbReference type="EMBL" id="CP001401">
    <property type="protein sequence ID" value="ACP55745.1"/>
    <property type="molecule type" value="Genomic_DNA"/>
</dbReference>
<dbReference type="RefSeq" id="WP_012711731.1">
    <property type="nucleotide sequence ID" value="NC_012632.1"/>
</dbReference>
<dbReference type="SMR" id="C3MZB3"/>
<dbReference type="KEGG" id="sim:M1627_1873"/>
<dbReference type="HOGENOM" id="CLU_071894_1_0_2"/>
<dbReference type="Proteomes" id="UP000002307">
    <property type="component" value="Chromosome"/>
</dbReference>
<dbReference type="GO" id="GO:0043022">
    <property type="term" value="F:ribosome binding"/>
    <property type="evidence" value="ECO:0007669"/>
    <property type="project" value="InterPro"/>
</dbReference>
<dbReference type="GO" id="GO:0003743">
    <property type="term" value="F:translation initiation factor activity"/>
    <property type="evidence" value="ECO:0007669"/>
    <property type="project" value="UniProtKB-UniRule"/>
</dbReference>
<dbReference type="GO" id="GO:0042256">
    <property type="term" value="P:cytosolic ribosome assembly"/>
    <property type="evidence" value="ECO:0007669"/>
    <property type="project" value="InterPro"/>
</dbReference>
<dbReference type="FunFam" id="3.75.10.10:FF:000011">
    <property type="entry name" value="Translation initiation factor 6"/>
    <property type="match status" value="1"/>
</dbReference>
<dbReference type="Gene3D" id="3.75.10.10">
    <property type="entry name" value="L-arginine/glycine Amidinotransferase, Chain A"/>
    <property type="match status" value="1"/>
</dbReference>
<dbReference type="HAMAP" id="MF_00032">
    <property type="entry name" value="eIF_6"/>
    <property type="match status" value="1"/>
</dbReference>
<dbReference type="InterPro" id="IPR002769">
    <property type="entry name" value="eIF6"/>
</dbReference>
<dbReference type="NCBIfam" id="TIGR00323">
    <property type="entry name" value="eIF-6"/>
    <property type="match status" value="1"/>
</dbReference>
<dbReference type="NCBIfam" id="NF003126">
    <property type="entry name" value="PRK04046.1-1"/>
    <property type="match status" value="1"/>
</dbReference>
<dbReference type="PANTHER" id="PTHR10784">
    <property type="entry name" value="TRANSLATION INITIATION FACTOR 6"/>
    <property type="match status" value="1"/>
</dbReference>
<dbReference type="Pfam" id="PF01912">
    <property type="entry name" value="eIF-6"/>
    <property type="match status" value="1"/>
</dbReference>
<dbReference type="PIRSF" id="PIRSF006413">
    <property type="entry name" value="IF-6"/>
    <property type="match status" value="1"/>
</dbReference>
<dbReference type="SMART" id="SM00654">
    <property type="entry name" value="eIF6"/>
    <property type="match status" value="1"/>
</dbReference>
<dbReference type="SUPFAM" id="SSF55909">
    <property type="entry name" value="Pentein"/>
    <property type="match status" value="1"/>
</dbReference>
<keyword id="KW-0396">Initiation factor</keyword>
<keyword id="KW-0648">Protein biosynthesis</keyword>
<reference key="1">
    <citation type="journal article" date="2009" name="Proc. Natl. Acad. Sci. U.S.A.">
        <title>Biogeography of the Sulfolobus islandicus pan-genome.</title>
        <authorList>
            <person name="Reno M.L."/>
            <person name="Held N.L."/>
            <person name="Fields C.J."/>
            <person name="Burke P.V."/>
            <person name="Whitaker R.J."/>
        </authorList>
    </citation>
    <scope>NUCLEOTIDE SEQUENCE [LARGE SCALE GENOMIC DNA]</scope>
    <source>
        <strain>M.16.27</strain>
    </source>
</reference>
<gene>
    <name evidence="1" type="primary">eif6</name>
    <name type="ordered locus">M1627_1873</name>
</gene>
<feature type="chain" id="PRO_1000202007" description="Translation initiation factor 6">
    <location>
        <begin position="1"/>
        <end position="223"/>
    </location>
</feature>